<evidence type="ECO:0000255" key="1">
    <source>
        <dbReference type="HAMAP-Rule" id="MF_00368"/>
    </source>
</evidence>
<evidence type="ECO:0000305" key="2"/>
<comment type="function">
    <text evidence="1">Forms part of the ribosomal stalk which helps the ribosome interact with GTP-bound translation factors. Is thus essential for accurate translation.</text>
</comment>
<comment type="subunit">
    <text evidence="1">Homodimer. Part of the ribosomal stalk of the 50S ribosomal subunit. Forms a multimeric L10(L12)X complex, where L10 forms an elongated spine to which 2 to 4 L12 dimers bind in a sequential fashion. Binds GTP-bound translation factors.</text>
</comment>
<comment type="similarity">
    <text evidence="1">Belongs to the bacterial ribosomal protein bL12 family.</text>
</comment>
<feature type="chain" id="PRO_0000243422" description="Large ribosomal subunit protein bL12">
    <location>
        <begin position="1"/>
        <end position="121"/>
    </location>
</feature>
<reference key="1">
    <citation type="journal article" date="2004" name="Proc. Natl. Acad. Sci. U.S.A.">
        <title>Genome sequence of the enterobacterial phytopathogen Erwinia carotovora subsp. atroseptica and characterization of virulence factors.</title>
        <authorList>
            <person name="Bell K.S."/>
            <person name="Sebaihia M."/>
            <person name="Pritchard L."/>
            <person name="Holden M.T.G."/>
            <person name="Hyman L.J."/>
            <person name="Holeva M.C."/>
            <person name="Thomson N.R."/>
            <person name="Bentley S.D."/>
            <person name="Churcher L.J.C."/>
            <person name="Mungall K."/>
            <person name="Atkin R."/>
            <person name="Bason N."/>
            <person name="Brooks K."/>
            <person name="Chillingworth T."/>
            <person name="Clark K."/>
            <person name="Doggett J."/>
            <person name="Fraser A."/>
            <person name="Hance Z."/>
            <person name="Hauser H."/>
            <person name="Jagels K."/>
            <person name="Moule S."/>
            <person name="Norbertczak H."/>
            <person name="Ormond D."/>
            <person name="Price C."/>
            <person name="Quail M.A."/>
            <person name="Sanders M."/>
            <person name="Walker D."/>
            <person name="Whitehead S."/>
            <person name="Salmond G.P.C."/>
            <person name="Birch P.R.J."/>
            <person name="Parkhill J."/>
            <person name="Toth I.K."/>
        </authorList>
    </citation>
    <scope>NUCLEOTIDE SEQUENCE [LARGE SCALE GENOMIC DNA]</scope>
    <source>
        <strain>SCRI 1043 / ATCC BAA-672</strain>
    </source>
</reference>
<accession>Q6DAN1</accession>
<keyword id="KW-1185">Reference proteome</keyword>
<keyword id="KW-0687">Ribonucleoprotein</keyword>
<keyword id="KW-0689">Ribosomal protein</keyword>
<gene>
    <name evidence="1" type="primary">rplL</name>
    <name type="ordered locus">ECA0222</name>
</gene>
<protein>
    <recommendedName>
        <fullName evidence="1">Large ribosomal subunit protein bL12</fullName>
    </recommendedName>
    <alternativeName>
        <fullName evidence="2">50S ribosomal protein L7/L12</fullName>
    </alternativeName>
</protein>
<sequence>MSITKDQILEAVAAMSVMDVVELISAMEEKFGVSAAAAVAVAAGPAEVAEEKTEFDVVLKAIGANKVAVIKAVRSATGLGLKEAKDLVESAPAVMKEGVSKDDAESLKKSLEEAGAEVEVK</sequence>
<dbReference type="EMBL" id="BX950851">
    <property type="protein sequence ID" value="CAG73141.1"/>
    <property type="molecule type" value="Genomic_DNA"/>
</dbReference>
<dbReference type="RefSeq" id="WP_011091859.1">
    <property type="nucleotide sequence ID" value="NC_004547.2"/>
</dbReference>
<dbReference type="SMR" id="Q6DAN1"/>
<dbReference type="STRING" id="218491.ECA0222"/>
<dbReference type="GeneID" id="57207088"/>
<dbReference type="KEGG" id="eca:ECA0222"/>
<dbReference type="PATRIC" id="fig|218491.5.peg.222"/>
<dbReference type="eggNOG" id="COG0222">
    <property type="taxonomic scope" value="Bacteria"/>
</dbReference>
<dbReference type="HOGENOM" id="CLU_086499_3_2_6"/>
<dbReference type="OrthoDB" id="9811748at2"/>
<dbReference type="Proteomes" id="UP000007966">
    <property type="component" value="Chromosome"/>
</dbReference>
<dbReference type="GO" id="GO:0022625">
    <property type="term" value="C:cytosolic large ribosomal subunit"/>
    <property type="evidence" value="ECO:0007669"/>
    <property type="project" value="TreeGrafter"/>
</dbReference>
<dbReference type="GO" id="GO:0003729">
    <property type="term" value="F:mRNA binding"/>
    <property type="evidence" value="ECO:0007669"/>
    <property type="project" value="TreeGrafter"/>
</dbReference>
<dbReference type="GO" id="GO:0003735">
    <property type="term" value="F:structural constituent of ribosome"/>
    <property type="evidence" value="ECO:0007669"/>
    <property type="project" value="InterPro"/>
</dbReference>
<dbReference type="GO" id="GO:0006412">
    <property type="term" value="P:translation"/>
    <property type="evidence" value="ECO:0007669"/>
    <property type="project" value="UniProtKB-UniRule"/>
</dbReference>
<dbReference type="CDD" id="cd00387">
    <property type="entry name" value="Ribosomal_L7_L12"/>
    <property type="match status" value="1"/>
</dbReference>
<dbReference type="FunFam" id="1.20.5.710:FF:000001">
    <property type="entry name" value="50S ribosomal protein L7/L12"/>
    <property type="match status" value="1"/>
</dbReference>
<dbReference type="FunFam" id="3.30.1390.10:FF:000001">
    <property type="entry name" value="50S ribosomal protein L7/L12"/>
    <property type="match status" value="1"/>
</dbReference>
<dbReference type="Gene3D" id="3.30.1390.10">
    <property type="match status" value="1"/>
</dbReference>
<dbReference type="Gene3D" id="1.20.5.710">
    <property type="entry name" value="Single helix bin"/>
    <property type="match status" value="1"/>
</dbReference>
<dbReference type="HAMAP" id="MF_00368">
    <property type="entry name" value="Ribosomal_bL12"/>
    <property type="match status" value="1"/>
</dbReference>
<dbReference type="InterPro" id="IPR000206">
    <property type="entry name" value="Ribosomal_bL12"/>
</dbReference>
<dbReference type="InterPro" id="IPR013823">
    <property type="entry name" value="Ribosomal_bL12_C"/>
</dbReference>
<dbReference type="InterPro" id="IPR014719">
    <property type="entry name" value="Ribosomal_bL12_C/ClpS-like"/>
</dbReference>
<dbReference type="InterPro" id="IPR008932">
    <property type="entry name" value="Ribosomal_bL12_oligo"/>
</dbReference>
<dbReference type="InterPro" id="IPR036235">
    <property type="entry name" value="Ribosomal_bL12_oligo_N_sf"/>
</dbReference>
<dbReference type="NCBIfam" id="TIGR00855">
    <property type="entry name" value="L12"/>
    <property type="match status" value="1"/>
</dbReference>
<dbReference type="PANTHER" id="PTHR45987">
    <property type="entry name" value="39S RIBOSOMAL PROTEIN L12"/>
    <property type="match status" value="1"/>
</dbReference>
<dbReference type="PANTHER" id="PTHR45987:SF4">
    <property type="entry name" value="LARGE RIBOSOMAL SUBUNIT PROTEIN BL12M"/>
    <property type="match status" value="1"/>
</dbReference>
<dbReference type="Pfam" id="PF00542">
    <property type="entry name" value="Ribosomal_L12"/>
    <property type="match status" value="1"/>
</dbReference>
<dbReference type="Pfam" id="PF16320">
    <property type="entry name" value="Ribosomal_L12_N"/>
    <property type="match status" value="1"/>
</dbReference>
<dbReference type="SUPFAM" id="SSF54736">
    <property type="entry name" value="ClpS-like"/>
    <property type="match status" value="1"/>
</dbReference>
<dbReference type="SUPFAM" id="SSF48300">
    <property type="entry name" value="Ribosomal protein L7/12, oligomerisation (N-terminal) domain"/>
    <property type="match status" value="1"/>
</dbReference>
<name>RL7_PECAS</name>
<proteinExistence type="inferred from homology"/>
<organism>
    <name type="scientific">Pectobacterium atrosepticum (strain SCRI 1043 / ATCC BAA-672)</name>
    <name type="common">Erwinia carotovora subsp. atroseptica</name>
    <dbReference type="NCBI Taxonomy" id="218491"/>
    <lineage>
        <taxon>Bacteria</taxon>
        <taxon>Pseudomonadati</taxon>
        <taxon>Pseudomonadota</taxon>
        <taxon>Gammaproteobacteria</taxon>
        <taxon>Enterobacterales</taxon>
        <taxon>Pectobacteriaceae</taxon>
        <taxon>Pectobacterium</taxon>
    </lineage>
</organism>